<sequence length="344" mass="36880">MSTNLSNAEILNNLLEGRDLDELTSRALMQRWLNDEISDVETGAFLSALRAKSSTGVELSSMAKELLNVCELPVARPNLYLVDTCGTGGDGANTFNISTAVAFVAASCGVKIAKHGNKSASGKVGSADVLLNLGLNLNCSLEKVINAVSEIGITFLFAPVWHKSLIKLAPLRKTLGIRTVFNQLGPLVNPLRPNAQVLGVASEDLLQPMGSALLNLGMNRAIVVHGSGGLDEASLQGKNKLVFIENGELRFSEINISDFNHENIANENLVVSDLDSNEEILKSVLNGSGQKSHMDVVALNVSLVLWAAGIEDNLNEGFNKALFSINKGDPWKKFLLLKNYLSAN</sequence>
<gene>
    <name evidence="1" type="primary">trpD</name>
    <name type="ordered locus">P9301_09061</name>
</gene>
<proteinExistence type="inferred from homology"/>
<comment type="function">
    <text evidence="1">Catalyzes the transfer of the phosphoribosyl group of 5-phosphorylribose-1-pyrophosphate (PRPP) to anthranilate to yield N-(5'-phosphoribosyl)-anthranilate (PRA).</text>
</comment>
<comment type="catalytic activity">
    <reaction evidence="1">
        <text>N-(5-phospho-beta-D-ribosyl)anthranilate + diphosphate = 5-phospho-alpha-D-ribose 1-diphosphate + anthranilate</text>
        <dbReference type="Rhea" id="RHEA:11768"/>
        <dbReference type="ChEBI" id="CHEBI:16567"/>
        <dbReference type="ChEBI" id="CHEBI:18277"/>
        <dbReference type="ChEBI" id="CHEBI:33019"/>
        <dbReference type="ChEBI" id="CHEBI:58017"/>
        <dbReference type="EC" id="2.4.2.18"/>
    </reaction>
</comment>
<comment type="cofactor">
    <cofactor evidence="1">
        <name>Mg(2+)</name>
        <dbReference type="ChEBI" id="CHEBI:18420"/>
    </cofactor>
    <text evidence="1">Binds 2 magnesium ions per monomer.</text>
</comment>
<comment type="pathway">
    <text evidence="1">Amino-acid biosynthesis; L-tryptophan biosynthesis; L-tryptophan from chorismate: step 2/5.</text>
</comment>
<comment type="subunit">
    <text evidence="1">Homodimer.</text>
</comment>
<comment type="similarity">
    <text evidence="1">Belongs to the anthranilate phosphoribosyltransferase family.</text>
</comment>
<protein>
    <recommendedName>
        <fullName evidence="1">Anthranilate phosphoribosyltransferase</fullName>
        <ecNumber evidence="1">2.4.2.18</ecNumber>
    </recommendedName>
</protein>
<reference key="1">
    <citation type="journal article" date="2007" name="PLoS Genet.">
        <title>Patterns and implications of gene gain and loss in the evolution of Prochlorococcus.</title>
        <authorList>
            <person name="Kettler G.C."/>
            <person name="Martiny A.C."/>
            <person name="Huang K."/>
            <person name="Zucker J."/>
            <person name="Coleman M.L."/>
            <person name="Rodrigue S."/>
            <person name="Chen F."/>
            <person name="Lapidus A."/>
            <person name="Ferriera S."/>
            <person name="Johnson J."/>
            <person name="Steglich C."/>
            <person name="Church G.M."/>
            <person name="Richardson P."/>
            <person name="Chisholm S.W."/>
        </authorList>
    </citation>
    <scope>NUCLEOTIDE SEQUENCE [LARGE SCALE GENOMIC DNA]</scope>
    <source>
        <strain>MIT 9301</strain>
    </source>
</reference>
<dbReference type="EC" id="2.4.2.18" evidence="1"/>
<dbReference type="EMBL" id="CP000576">
    <property type="protein sequence ID" value="ABO17529.1"/>
    <property type="molecule type" value="Genomic_DNA"/>
</dbReference>
<dbReference type="RefSeq" id="WP_011862878.1">
    <property type="nucleotide sequence ID" value="NC_009091.1"/>
</dbReference>
<dbReference type="SMR" id="A3PCQ4"/>
<dbReference type="STRING" id="167546.P9301_09061"/>
<dbReference type="KEGG" id="pmg:P9301_09061"/>
<dbReference type="eggNOG" id="COG0547">
    <property type="taxonomic scope" value="Bacteria"/>
</dbReference>
<dbReference type="HOGENOM" id="CLU_034315_2_1_3"/>
<dbReference type="OrthoDB" id="9806430at2"/>
<dbReference type="UniPathway" id="UPA00035">
    <property type="reaction ID" value="UER00041"/>
</dbReference>
<dbReference type="Proteomes" id="UP000001430">
    <property type="component" value="Chromosome"/>
</dbReference>
<dbReference type="GO" id="GO:0005829">
    <property type="term" value="C:cytosol"/>
    <property type="evidence" value="ECO:0007669"/>
    <property type="project" value="TreeGrafter"/>
</dbReference>
<dbReference type="GO" id="GO:0004048">
    <property type="term" value="F:anthranilate phosphoribosyltransferase activity"/>
    <property type="evidence" value="ECO:0007669"/>
    <property type="project" value="UniProtKB-UniRule"/>
</dbReference>
<dbReference type="GO" id="GO:0000287">
    <property type="term" value="F:magnesium ion binding"/>
    <property type="evidence" value="ECO:0007669"/>
    <property type="project" value="UniProtKB-UniRule"/>
</dbReference>
<dbReference type="GO" id="GO:0000162">
    <property type="term" value="P:L-tryptophan biosynthetic process"/>
    <property type="evidence" value="ECO:0007669"/>
    <property type="project" value="UniProtKB-UniRule"/>
</dbReference>
<dbReference type="FunFam" id="3.40.1030.10:FF:000002">
    <property type="entry name" value="Anthranilate phosphoribosyltransferase"/>
    <property type="match status" value="1"/>
</dbReference>
<dbReference type="Gene3D" id="3.40.1030.10">
    <property type="entry name" value="Nucleoside phosphorylase/phosphoribosyltransferase catalytic domain"/>
    <property type="match status" value="1"/>
</dbReference>
<dbReference type="Gene3D" id="1.20.970.10">
    <property type="entry name" value="Transferase, Pyrimidine Nucleoside Phosphorylase, Chain C"/>
    <property type="match status" value="1"/>
</dbReference>
<dbReference type="HAMAP" id="MF_00211">
    <property type="entry name" value="TrpD"/>
    <property type="match status" value="1"/>
</dbReference>
<dbReference type="InterPro" id="IPR005940">
    <property type="entry name" value="Anthranilate_Pribosyl_Tfrase"/>
</dbReference>
<dbReference type="InterPro" id="IPR000312">
    <property type="entry name" value="Glycosyl_Trfase_fam3"/>
</dbReference>
<dbReference type="InterPro" id="IPR017459">
    <property type="entry name" value="Glycosyl_Trfase_fam3_N_dom"/>
</dbReference>
<dbReference type="InterPro" id="IPR036320">
    <property type="entry name" value="Glycosyl_Trfase_fam3_N_dom_sf"/>
</dbReference>
<dbReference type="InterPro" id="IPR035902">
    <property type="entry name" value="Nuc_phospho_transferase"/>
</dbReference>
<dbReference type="NCBIfam" id="TIGR01245">
    <property type="entry name" value="trpD"/>
    <property type="match status" value="1"/>
</dbReference>
<dbReference type="PANTHER" id="PTHR43285">
    <property type="entry name" value="ANTHRANILATE PHOSPHORIBOSYLTRANSFERASE"/>
    <property type="match status" value="1"/>
</dbReference>
<dbReference type="PANTHER" id="PTHR43285:SF2">
    <property type="entry name" value="ANTHRANILATE PHOSPHORIBOSYLTRANSFERASE"/>
    <property type="match status" value="1"/>
</dbReference>
<dbReference type="Pfam" id="PF02885">
    <property type="entry name" value="Glycos_trans_3N"/>
    <property type="match status" value="1"/>
</dbReference>
<dbReference type="Pfam" id="PF00591">
    <property type="entry name" value="Glycos_transf_3"/>
    <property type="match status" value="1"/>
</dbReference>
<dbReference type="SUPFAM" id="SSF52418">
    <property type="entry name" value="Nucleoside phosphorylase/phosphoribosyltransferase catalytic domain"/>
    <property type="match status" value="1"/>
</dbReference>
<dbReference type="SUPFAM" id="SSF47648">
    <property type="entry name" value="Nucleoside phosphorylase/phosphoribosyltransferase N-terminal domain"/>
    <property type="match status" value="1"/>
</dbReference>
<keyword id="KW-0028">Amino-acid biosynthesis</keyword>
<keyword id="KW-0057">Aromatic amino acid biosynthesis</keyword>
<keyword id="KW-0328">Glycosyltransferase</keyword>
<keyword id="KW-0460">Magnesium</keyword>
<keyword id="KW-0479">Metal-binding</keyword>
<keyword id="KW-1185">Reference proteome</keyword>
<keyword id="KW-0808">Transferase</keyword>
<keyword id="KW-0822">Tryptophan biosynthesis</keyword>
<feature type="chain" id="PRO_1000043043" description="Anthranilate phosphoribosyltransferase">
    <location>
        <begin position="1"/>
        <end position="344"/>
    </location>
</feature>
<feature type="binding site" evidence="1">
    <location>
        <position position="86"/>
    </location>
    <ligand>
        <name>5-phospho-alpha-D-ribose 1-diphosphate</name>
        <dbReference type="ChEBI" id="CHEBI:58017"/>
    </ligand>
</feature>
<feature type="binding site" evidence="1">
    <location>
        <position position="86"/>
    </location>
    <ligand>
        <name>anthranilate</name>
        <dbReference type="ChEBI" id="CHEBI:16567"/>
        <label>1</label>
    </ligand>
</feature>
<feature type="binding site" evidence="1">
    <location>
        <begin position="89"/>
        <end position="90"/>
    </location>
    <ligand>
        <name>5-phospho-alpha-D-ribose 1-diphosphate</name>
        <dbReference type="ChEBI" id="CHEBI:58017"/>
    </ligand>
</feature>
<feature type="binding site" evidence="1">
    <location>
        <position position="94"/>
    </location>
    <ligand>
        <name>5-phospho-alpha-D-ribose 1-diphosphate</name>
        <dbReference type="ChEBI" id="CHEBI:58017"/>
    </ligand>
</feature>
<feature type="binding site" evidence="1">
    <location>
        <begin position="96"/>
        <end position="99"/>
    </location>
    <ligand>
        <name>5-phospho-alpha-D-ribose 1-diphosphate</name>
        <dbReference type="ChEBI" id="CHEBI:58017"/>
    </ligand>
</feature>
<feature type="binding site" evidence="1">
    <location>
        <position position="98"/>
    </location>
    <ligand>
        <name>Mg(2+)</name>
        <dbReference type="ChEBI" id="CHEBI:18420"/>
        <label>1</label>
    </ligand>
</feature>
<feature type="binding site" evidence="1">
    <location>
        <begin position="114"/>
        <end position="122"/>
    </location>
    <ligand>
        <name>5-phospho-alpha-D-ribose 1-diphosphate</name>
        <dbReference type="ChEBI" id="CHEBI:58017"/>
    </ligand>
</feature>
<feature type="binding site" evidence="1">
    <location>
        <position position="117"/>
    </location>
    <ligand>
        <name>anthranilate</name>
        <dbReference type="ChEBI" id="CHEBI:16567"/>
        <label>1</label>
    </ligand>
</feature>
<feature type="binding site" evidence="1">
    <location>
        <position position="126"/>
    </location>
    <ligand>
        <name>5-phospho-alpha-D-ribose 1-diphosphate</name>
        <dbReference type="ChEBI" id="CHEBI:58017"/>
    </ligand>
</feature>
<feature type="binding site" evidence="1">
    <location>
        <position position="172"/>
    </location>
    <ligand>
        <name>anthranilate</name>
        <dbReference type="ChEBI" id="CHEBI:16567"/>
        <label>2</label>
    </ligand>
</feature>
<feature type="binding site" evidence="1">
    <location>
        <position position="231"/>
    </location>
    <ligand>
        <name>Mg(2+)</name>
        <dbReference type="ChEBI" id="CHEBI:18420"/>
        <label>2</label>
    </ligand>
</feature>
<feature type="binding site" evidence="1">
    <location>
        <position position="232"/>
    </location>
    <ligand>
        <name>Mg(2+)</name>
        <dbReference type="ChEBI" id="CHEBI:18420"/>
        <label>1</label>
    </ligand>
</feature>
<feature type="binding site" evidence="1">
    <location>
        <position position="232"/>
    </location>
    <ligand>
        <name>Mg(2+)</name>
        <dbReference type="ChEBI" id="CHEBI:18420"/>
        <label>2</label>
    </ligand>
</feature>
<name>TRPD_PROM0</name>
<organism>
    <name type="scientific">Prochlorococcus marinus (strain MIT 9301)</name>
    <dbReference type="NCBI Taxonomy" id="167546"/>
    <lineage>
        <taxon>Bacteria</taxon>
        <taxon>Bacillati</taxon>
        <taxon>Cyanobacteriota</taxon>
        <taxon>Cyanophyceae</taxon>
        <taxon>Synechococcales</taxon>
        <taxon>Prochlorococcaceae</taxon>
        <taxon>Prochlorococcus</taxon>
    </lineage>
</organism>
<accession>A3PCQ4</accession>
<evidence type="ECO:0000255" key="1">
    <source>
        <dbReference type="HAMAP-Rule" id="MF_00211"/>
    </source>
</evidence>